<dbReference type="EMBL" id="AM942759">
    <property type="protein sequence ID" value="CAR41634.1"/>
    <property type="molecule type" value="Genomic_DNA"/>
</dbReference>
<dbReference type="RefSeq" id="WP_004244569.1">
    <property type="nucleotide sequence ID" value="NC_010554.1"/>
</dbReference>
<dbReference type="SMR" id="B4EV91"/>
<dbReference type="DNASU" id="6802170"/>
<dbReference type="EnsemblBacteria" id="CAR41634">
    <property type="protein sequence ID" value="CAR41634"/>
    <property type="gene ID" value="PMI0698"/>
</dbReference>
<dbReference type="GeneID" id="6802170"/>
<dbReference type="KEGG" id="pmr:PMI0698"/>
<dbReference type="eggNOG" id="COG2834">
    <property type="taxonomic scope" value="Bacteria"/>
</dbReference>
<dbReference type="HOGENOM" id="CLU_087560_1_1_6"/>
<dbReference type="Proteomes" id="UP000008319">
    <property type="component" value="Chromosome"/>
</dbReference>
<dbReference type="GO" id="GO:0030288">
    <property type="term" value="C:outer membrane-bounded periplasmic space"/>
    <property type="evidence" value="ECO:0007669"/>
    <property type="project" value="TreeGrafter"/>
</dbReference>
<dbReference type="GO" id="GO:0044874">
    <property type="term" value="P:lipoprotein localization to outer membrane"/>
    <property type="evidence" value="ECO:0007669"/>
    <property type="project" value="UniProtKB-UniRule"/>
</dbReference>
<dbReference type="GO" id="GO:0042953">
    <property type="term" value="P:lipoprotein transport"/>
    <property type="evidence" value="ECO:0007669"/>
    <property type="project" value="InterPro"/>
</dbReference>
<dbReference type="CDD" id="cd16325">
    <property type="entry name" value="LolA"/>
    <property type="match status" value="1"/>
</dbReference>
<dbReference type="Gene3D" id="2.50.20.10">
    <property type="entry name" value="Lipoprotein localisation LolA/LolB/LppX"/>
    <property type="match status" value="1"/>
</dbReference>
<dbReference type="HAMAP" id="MF_00240">
    <property type="entry name" value="LolA"/>
    <property type="match status" value="1"/>
</dbReference>
<dbReference type="InterPro" id="IPR029046">
    <property type="entry name" value="LolA/LolB/LppX"/>
</dbReference>
<dbReference type="InterPro" id="IPR004564">
    <property type="entry name" value="OM_lipoprot_carrier_LolA-like"/>
</dbReference>
<dbReference type="InterPro" id="IPR018323">
    <property type="entry name" value="OM_lipoprot_carrier_LolA_Pbac"/>
</dbReference>
<dbReference type="NCBIfam" id="TIGR00547">
    <property type="entry name" value="lolA"/>
    <property type="match status" value="1"/>
</dbReference>
<dbReference type="PANTHER" id="PTHR35869">
    <property type="entry name" value="OUTER-MEMBRANE LIPOPROTEIN CARRIER PROTEIN"/>
    <property type="match status" value="1"/>
</dbReference>
<dbReference type="PANTHER" id="PTHR35869:SF1">
    <property type="entry name" value="OUTER-MEMBRANE LIPOPROTEIN CARRIER PROTEIN"/>
    <property type="match status" value="1"/>
</dbReference>
<dbReference type="Pfam" id="PF03548">
    <property type="entry name" value="LolA"/>
    <property type="match status" value="1"/>
</dbReference>
<dbReference type="SUPFAM" id="SSF89392">
    <property type="entry name" value="Prokaryotic lipoproteins and lipoprotein localization factors"/>
    <property type="match status" value="1"/>
</dbReference>
<sequence length="201" mass="22577">MKKVLLTVCAIALFGSQAAWADARQDLQQRLNKVNSFQANFSQTVTSNEGALIQKGEGHLKVQRPDLFNWQMTAPDESTLISDGKTLWFYNPFVEQVTATWLESATTNTPFMLIARNDSKEWQNYDVKQNGDRFELTPKTENNLKHFSITVSPNGQIQQFAATEQDGQVSQYQLTAQKVAPIDASAFRFTPPAGVTVDDQR</sequence>
<organism>
    <name type="scientific">Proteus mirabilis (strain HI4320)</name>
    <dbReference type="NCBI Taxonomy" id="529507"/>
    <lineage>
        <taxon>Bacteria</taxon>
        <taxon>Pseudomonadati</taxon>
        <taxon>Pseudomonadota</taxon>
        <taxon>Gammaproteobacteria</taxon>
        <taxon>Enterobacterales</taxon>
        <taxon>Morganellaceae</taxon>
        <taxon>Proteus</taxon>
    </lineage>
</organism>
<name>LOLA_PROMH</name>
<feature type="signal peptide" evidence="1">
    <location>
        <begin position="1"/>
        <end position="21"/>
    </location>
</feature>
<feature type="chain" id="PRO_1000100722" description="Outer-membrane lipoprotein carrier protein">
    <location>
        <begin position="22"/>
        <end position="201"/>
    </location>
</feature>
<proteinExistence type="inferred from homology"/>
<keyword id="KW-0143">Chaperone</keyword>
<keyword id="KW-0574">Periplasm</keyword>
<keyword id="KW-0653">Protein transport</keyword>
<keyword id="KW-1185">Reference proteome</keyword>
<keyword id="KW-0732">Signal</keyword>
<keyword id="KW-0813">Transport</keyword>
<reference key="1">
    <citation type="journal article" date="2008" name="J. Bacteriol.">
        <title>Complete genome sequence of uropathogenic Proteus mirabilis, a master of both adherence and motility.</title>
        <authorList>
            <person name="Pearson M.M."/>
            <person name="Sebaihia M."/>
            <person name="Churcher C."/>
            <person name="Quail M.A."/>
            <person name="Seshasayee A.S."/>
            <person name="Luscombe N.M."/>
            <person name="Abdellah Z."/>
            <person name="Arrosmith C."/>
            <person name="Atkin B."/>
            <person name="Chillingworth T."/>
            <person name="Hauser H."/>
            <person name="Jagels K."/>
            <person name="Moule S."/>
            <person name="Mungall K."/>
            <person name="Norbertczak H."/>
            <person name="Rabbinowitsch E."/>
            <person name="Walker D."/>
            <person name="Whithead S."/>
            <person name="Thomson N.R."/>
            <person name="Rather P.N."/>
            <person name="Parkhill J."/>
            <person name="Mobley H.L.T."/>
        </authorList>
    </citation>
    <scope>NUCLEOTIDE SEQUENCE [LARGE SCALE GENOMIC DNA]</scope>
    <source>
        <strain>HI4320</strain>
    </source>
</reference>
<accession>B4EV91</accession>
<comment type="function">
    <text evidence="1">Participates in the translocation of lipoproteins from the inner membrane to the outer membrane. Only forms a complex with a lipoprotein if the residue after the N-terminal Cys is not an aspartate (The Asp acts as a targeting signal to indicate that the lipoprotein should stay in the inner membrane).</text>
</comment>
<comment type="subunit">
    <text evidence="1">Monomer.</text>
</comment>
<comment type="subcellular location">
    <subcellularLocation>
        <location evidence="1">Periplasm</location>
    </subcellularLocation>
</comment>
<comment type="similarity">
    <text evidence="1">Belongs to the LolA family.</text>
</comment>
<evidence type="ECO:0000255" key="1">
    <source>
        <dbReference type="HAMAP-Rule" id="MF_00240"/>
    </source>
</evidence>
<gene>
    <name evidence="1" type="primary">lolA</name>
    <name type="ordered locus">PMI0698</name>
</gene>
<protein>
    <recommendedName>
        <fullName evidence="1">Outer-membrane lipoprotein carrier protein</fullName>
    </recommendedName>
</protein>